<organism>
    <name type="scientific">Zygosaccharomyces rouxii (strain ATCC 2623 / CBS 732 / NBRC 1130 / NCYC 568 / NRRL Y-229)</name>
    <dbReference type="NCBI Taxonomy" id="559307"/>
    <lineage>
        <taxon>Eukaryota</taxon>
        <taxon>Fungi</taxon>
        <taxon>Dikarya</taxon>
        <taxon>Ascomycota</taxon>
        <taxon>Saccharomycotina</taxon>
        <taxon>Saccharomycetes</taxon>
        <taxon>Saccharomycetales</taxon>
        <taxon>Saccharomycetaceae</taxon>
        <taxon>Zygosaccharomyces</taxon>
    </lineage>
</organism>
<comment type="function">
    <text evidence="1">Positively regulates the activity of the minus-end directed microtubule motor protein dynein. Plays a central role in positioning the mitotic spindle at the bud neck during cell division. Targets cytoplasmic dynein to microtubule plus ends, thereby promoting dynein-mediated microtubule sliding along the bud cortex and consequently the movement of the mitotic spindle to the bud neck.</text>
</comment>
<comment type="subunit">
    <text evidence="1">Self-associates. Interacts with NDL1 and dynein.</text>
</comment>
<comment type="subcellular location">
    <subcellularLocation>
        <location evidence="1">Cytoplasm</location>
        <location evidence="1">Cytoskeleton</location>
    </subcellularLocation>
    <subcellularLocation>
        <location evidence="1">Cytoplasm</location>
        <location evidence="1">Cytoskeleton</location>
        <location evidence="1">Spindle pole</location>
    </subcellularLocation>
    <text evidence="1">Localizes to the plus ends of microtubules and the mitotic spindle poles.</text>
</comment>
<comment type="similarity">
    <text evidence="1">Belongs to the WD repeat LIS1/nudF family.</text>
</comment>
<protein>
    <recommendedName>
        <fullName evidence="1">Nuclear distribution protein PAC1</fullName>
    </recommendedName>
    <alternativeName>
        <fullName evidence="1">Lissencephaly-1 homolog</fullName>
        <shortName evidence="1">LIS-1</shortName>
    </alternativeName>
    <alternativeName>
        <fullName evidence="1">nudF homolog</fullName>
    </alternativeName>
</protein>
<accession>C5DY07</accession>
<proteinExistence type="inferred from homology"/>
<reference key="1">
    <citation type="journal article" date="2009" name="Genome Res.">
        <title>Comparative genomics of protoploid Saccharomycetaceae.</title>
        <authorList>
            <consortium name="The Genolevures Consortium"/>
            <person name="Souciet J.-L."/>
            <person name="Dujon B."/>
            <person name="Gaillardin C."/>
            <person name="Johnston M."/>
            <person name="Baret P.V."/>
            <person name="Cliften P."/>
            <person name="Sherman D.J."/>
            <person name="Weissenbach J."/>
            <person name="Westhof E."/>
            <person name="Wincker P."/>
            <person name="Jubin C."/>
            <person name="Poulain J."/>
            <person name="Barbe V."/>
            <person name="Segurens B."/>
            <person name="Artiguenave F."/>
            <person name="Anthouard V."/>
            <person name="Vacherie B."/>
            <person name="Val M.-E."/>
            <person name="Fulton R.S."/>
            <person name="Minx P."/>
            <person name="Wilson R."/>
            <person name="Durrens P."/>
            <person name="Jean G."/>
            <person name="Marck C."/>
            <person name="Martin T."/>
            <person name="Nikolski M."/>
            <person name="Rolland T."/>
            <person name="Seret M.-L."/>
            <person name="Casaregola S."/>
            <person name="Despons L."/>
            <person name="Fairhead C."/>
            <person name="Fischer G."/>
            <person name="Lafontaine I."/>
            <person name="Leh V."/>
            <person name="Lemaire M."/>
            <person name="de Montigny J."/>
            <person name="Neuveglise C."/>
            <person name="Thierry A."/>
            <person name="Blanc-Lenfle I."/>
            <person name="Bleykasten C."/>
            <person name="Diffels J."/>
            <person name="Fritsch E."/>
            <person name="Frangeul L."/>
            <person name="Goeffon A."/>
            <person name="Jauniaux N."/>
            <person name="Kachouri-Lafond R."/>
            <person name="Payen C."/>
            <person name="Potier S."/>
            <person name="Pribylova L."/>
            <person name="Ozanne C."/>
            <person name="Richard G.-F."/>
            <person name="Sacerdot C."/>
            <person name="Straub M.-L."/>
            <person name="Talla E."/>
        </authorList>
    </citation>
    <scope>NUCLEOTIDE SEQUENCE [LARGE SCALE GENOMIC DNA]</scope>
    <source>
        <strain>ATCC 2623 / CBS 732 / BCRC 21506 / NBRC 1130 / NCYC 568 / NRRL Y-229</strain>
    </source>
</reference>
<evidence type="ECO:0000255" key="1">
    <source>
        <dbReference type="HAMAP-Rule" id="MF_03141"/>
    </source>
</evidence>
<gene>
    <name evidence="1" type="primary">PAC1</name>
    <name evidence="1" type="synonym">LIS1</name>
    <name type="ordered locus">ZYRO0F09284g</name>
</gene>
<name>LIS1_ZYGRC</name>
<dbReference type="EMBL" id="CU928178">
    <property type="protein sequence ID" value="CAR28668.1"/>
    <property type="molecule type" value="Genomic_DNA"/>
</dbReference>
<dbReference type="RefSeq" id="XP_002497601.1">
    <property type="nucleotide sequence ID" value="XM_002497556.1"/>
</dbReference>
<dbReference type="SMR" id="C5DY07"/>
<dbReference type="FunCoup" id="C5DY07">
    <property type="interactions" value="90"/>
</dbReference>
<dbReference type="STRING" id="559307.C5DY07"/>
<dbReference type="GeneID" id="8205365"/>
<dbReference type="KEGG" id="zro:ZYRO0F09284g"/>
<dbReference type="HOGENOM" id="CLU_000288_57_15_1"/>
<dbReference type="InParanoid" id="C5DY07"/>
<dbReference type="Proteomes" id="UP000008536">
    <property type="component" value="Chromosome F"/>
</dbReference>
<dbReference type="GO" id="GO:0005737">
    <property type="term" value="C:cytoplasm"/>
    <property type="evidence" value="ECO:0007669"/>
    <property type="project" value="UniProtKB-UniRule"/>
</dbReference>
<dbReference type="GO" id="GO:0005874">
    <property type="term" value="C:microtubule"/>
    <property type="evidence" value="ECO:0007669"/>
    <property type="project" value="UniProtKB-KW"/>
</dbReference>
<dbReference type="GO" id="GO:0005875">
    <property type="term" value="C:microtubule associated complex"/>
    <property type="evidence" value="ECO:0007669"/>
    <property type="project" value="UniProtKB-UniRule"/>
</dbReference>
<dbReference type="GO" id="GO:0000922">
    <property type="term" value="C:spindle pole"/>
    <property type="evidence" value="ECO:0007669"/>
    <property type="project" value="UniProtKB-SubCell"/>
</dbReference>
<dbReference type="GO" id="GO:0070840">
    <property type="term" value="F:dynein complex binding"/>
    <property type="evidence" value="ECO:0007669"/>
    <property type="project" value="UniProtKB-UniRule"/>
</dbReference>
<dbReference type="GO" id="GO:0051301">
    <property type="term" value="P:cell division"/>
    <property type="evidence" value="ECO:0007669"/>
    <property type="project" value="UniProtKB-KW"/>
</dbReference>
<dbReference type="GO" id="GO:0000132">
    <property type="term" value="P:establishment of mitotic spindle orientation"/>
    <property type="evidence" value="ECO:0007669"/>
    <property type="project" value="UniProtKB-UniRule"/>
</dbReference>
<dbReference type="GO" id="GO:0051012">
    <property type="term" value="P:microtubule sliding"/>
    <property type="evidence" value="ECO:0007669"/>
    <property type="project" value="UniProtKB-UniRule"/>
</dbReference>
<dbReference type="Gene3D" id="1.20.960.30">
    <property type="match status" value="1"/>
</dbReference>
<dbReference type="Gene3D" id="2.130.10.10">
    <property type="entry name" value="YVTN repeat-like/Quinoprotein amine dehydrogenase"/>
    <property type="match status" value="1"/>
</dbReference>
<dbReference type="HAMAP" id="MF_03141">
    <property type="entry name" value="lis1"/>
    <property type="match status" value="1"/>
</dbReference>
<dbReference type="InterPro" id="IPR053299">
    <property type="entry name" value="ASTRA_WD_repeat"/>
</dbReference>
<dbReference type="InterPro" id="IPR017252">
    <property type="entry name" value="Dynein_regulator_LIS1"/>
</dbReference>
<dbReference type="InterPro" id="IPR037190">
    <property type="entry name" value="LIS1_N"/>
</dbReference>
<dbReference type="InterPro" id="IPR015943">
    <property type="entry name" value="WD40/YVTN_repeat-like_dom_sf"/>
</dbReference>
<dbReference type="InterPro" id="IPR036322">
    <property type="entry name" value="WD40_repeat_dom_sf"/>
</dbReference>
<dbReference type="InterPro" id="IPR001680">
    <property type="entry name" value="WD40_rpt"/>
</dbReference>
<dbReference type="PANTHER" id="PTHR44156">
    <property type="entry name" value="SUPERNUMERARY LIMBS, ISOFORM B-RELATED"/>
    <property type="match status" value="1"/>
</dbReference>
<dbReference type="Pfam" id="PF00400">
    <property type="entry name" value="WD40"/>
    <property type="match status" value="4"/>
</dbReference>
<dbReference type="SMART" id="SM00320">
    <property type="entry name" value="WD40"/>
    <property type="match status" value="7"/>
</dbReference>
<dbReference type="SUPFAM" id="SSF109925">
    <property type="entry name" value="Lissencephaly-1 protein (Lis-1, PAF-AH alpha) N-terminal domain"/>
    <property type="match status" value="1"/>
</dbReference>
<dbReference type="SUPFAM" id="SSF50978">
    <property type="entry name" value="WD40 repeat-like"/>
    <property type="match status" value="1"/>
</dbReference>
<dbReference type="PROSITE" id="PS00678">
    <property type="entry name" value="WD_REPEATS_1"/>
    <property type="match status" value="1"/>
</dbReference>
<dbReference type="PROSITE" id="PS50082">
    <property type="entry name" value="WD_REPEATS_2"/>
    <property type="match status" value="1"/>
</dbReference>
<dbReference type="PROSITE" id="PS50294">
    <property type="entry name" value="WD_REPEATS_REGION"/>
    <property type="match status" value="1"/>
</dbReference>
<sequence length="444" mass="49929">MDLPLSDEQIRELDESTLDYLLWRNKGIDITQLANSLQVDAPTLQEDTNRLPLLARKWTAIARLQRRIMSLEQNIRDLREASIEMNAPAFSPESSESARIAWIAPAQPRASITLESPVTGVRLHPELAVVFVSTEQGRLHCFDLMDITLPLASIQAHTRAITSVDVFCWQQTTYVVTGSKDMQVRVFTWSAGQGLKLLRSFAGHEHVVSGVRIWVGPRTTNIGGGSLLLASCSRDTSVKIWDVNSGWCLKSFQPHSDWVRCLDVYGEFLITGCQDSTLRLTHWPSGNGLSVGLGHDFPVESVRFIGSLQDAVTTEGRTNNWLGHCVSTSRDRTSKIWLLPQPRRLPQRPPVPHSTDAQFLCKWTLRGHDSWIKAVGSRGDHVFTASDDKSVICWNWTNGQCLKKWNRIHQGFVTCIDLDDSNHPLKRKIMVTGGIDCKCHIFMQ</sequence>
<feature type="chain" id="PRO_0000405113" description="Nuclear distribution protein PAC1">
    <location>
        <begin position="1"/>
        <end position="444"/>
    </location>
</feature>
<feature type="repeat" description="WD 1">
    <location>
        <begin position="113"/>
        <end position="152"/>
    </location>
</feature>
<feature type="repeat" description="WD 2">
    <location>
        <begin position="156"/>
        <end position="199"/>
    </location>
</feature>
<feature type="repeat" description="WD 3">
    <location>
        <begin position="204"/>
        <end position="251"/>
    </location>
</feature>
<feature type="repeat" description="WD 4">
    <location>
        <begin position="254"/>
        <end position="293"/>
    </location>
</feature>
<feature type="repeat" description="WD 5">
    <location>
        <begin position="307"/>
        <end position="347"/>
    </location>
</feature>
<feature type="repeat" description="WD 6">
    <location>
        <begin position="367"/>
        <end position="406"/>
    </location>
</feature>
<feature type="repeat" description="WD 7">
    <location>
        <begin position="408"/>
        <end position="444"/>
    </location>
</feature>
<feature type="coiled-coil region" evidence="1">
    <location>
        <begin position="59"/>
        <end position="87"/>
    </location>
</feature>
<keyword id="KW-0131">Cell cycle</keyword>
<keyword id="KW-0132">Cell division</keyword>
<keyword id="KW-0175">Coiled coil</keyword>
<keyword id="KW-0963">Cytoplasm</keyword>
<keyword id="KW-0206">Cytoskeleton</keyword>
<keyword id="KW-0493">Microtubule</keyword>
<keyword id="KW-0498">Mitosis</keyword>
<keyword id="KW-1185">Reference proteome</keyword>
<keyword id="KW-0677">Repeat</keyword>
<keyword id="KW-0813">Transport</keyword>
<keyword id="KW-0853">WD repeat</keyword>